<accession>A2CC50</accession>
<keyword id="KW-0687">Ribonucleoprotein</keyword>
<keyword id="KW-0689">Ribosomal protein</keyword>
<keyword id="KW-0694">RNA-binding</keyword>
<keyword id="KW-0699">rRNA-binding</keyword>
<comment type="function">
    <text evidence="1">Located on the platform of the 30S subunit, it bridges several disparate RNA helices of the 16S rRNA. Forms part of the Shine-Dalgarno cleft in the 70S ribosome.</text>
</comment>
<comment type="subunit">
    <text evidence="1">Part of the 30S ribosomal subunit. Interacts with proteins S7 and S18. Binds to IF-3.</text>
</comment>
<comment type="similarity">
    <text evidence="1">Belongs to the universal ribosomal protein uS11 family.</text>
</comment>
<name>RS11_PROM3</name>
<protein>
    <recommendedName>
        <fullName evidence="1">Small ribosomal subunit protein uS11</fullName>
    </recommendedName>
    <alternativeName>
        <fullName evidence="2">30S ribosomal protein S11</fullName>
    </alternativeName>
</protein>
<dbReference type="EMBL" id="CP000554">
    <property type="protein sequence ID" value="ABM79060.1"/>
    <property type="molecule type" value="Genomic_DNA"/>
</dbReference>
<dbReference type="RefSeq" id="WP_011826926.1">
    <property type="nucleotide sequence ID" value="NC_008820.1"/>
</dbReference>
<dbReference type="SMR" id="A2CC50"/>
<dbReference type="STRING" id="59922.P9303_23251"/>
<dbReference type="KEGG" id="pmf:P9303_23251"/>
<dbReference type="HOGENOM" id="CLU_072439_5_0_3"/>
<dbReference type="BioCyc" id="PMAR59922:G1G80-2041-MONOMER"/>
<dbReference type="Proteomes" id="UP000002274">
    <property type="component" value="Chromosome"/>
</dbReference>
<dbReference type="GO" id="GO:1990904">
    <property type="term" value="C:ribonucleoprotein complex"/>
    <property type="evidence" value="ECO:0007669"/>
    <property type="project" value="UniProtKB-KW"/>
</dbReference>
<dbReference type="GO" id="GO:0005840">
    <property type="term" value="C:ribosome"/>
    <property type="evidence" value="ECO:0007669"/>
    <property type="project" value="UniProtKB-KW"/>
</dbReference>
<dbReference type="GO" id="GO:0019843">
    <property type="term" value="F:rRNA binding"/>
    <property type="evidence" value="ECO:0007669"/>
    <property type="project" value="UniProtKB-UniRule"/>
</dbReference>
<dbReference type="GO" id="GO:0003735">
    <property type="term" value="F:structural constituent of ribosome"/>
    <property type="evidence" value="ECO:0007669"/>
    <property type="project" value="InterPro"/>
</dbReference>
<dbReference type="GO" id="GO:0006412">
    <property type="term" value="P:translation"/>
    <property type="evidence" value="ECO:0007669"/>
    <property type="project" value="UniProtKB-UniRule"/>
</dbReference>
<dbReference type="FunFam" id="3.30.420.80:FF:000001">
    <property type="entry name" value="30S ribosomal protein S11"/>
    <property type="match status" value="1"/>
</dbReference>
<dbReference type="Gene3D" id="3.30.420.80">
    <property type="entry name" value="Ribosomal protein S11"/>
    <property type="match status" value="1"/>
</dbReference>
<dbReference type="HAMAP" id="MF_01310">
    <property type="entry name" value="Ribosomal_uS11"/>
    <property type="match status" value="1"/>
</dbReference>
<dbReference type="InterPro" id="IPR001971">
    <property type="entry name" value="Ribosomal_uS11"/>
</dbReference>
<dbReference type="InterPro" id="IPR019981">
    <property type="entry name" value="Ribosomal_uS11_bac-type"/>
</dbReference>
<dbReference type="InterPro" id="IPR018102">
    <property type="entry name" value="Ribosomal_uS11_CS"/>
</dbReference>
<dbReference type="InterPro" id="IPR036967">
    <property type="entry name" value="Ribosomal_uS11_sf"/>
</dbReference>
<dbReference type="NCBIfam" id="NF003698">
    <property type="entry name" value="PRK05309.1"/>
    <property type="match status" value="1"/>
</dbReference>
<dbReference type="NCBIfam" id="TIGR03632">
    <property type="entry name" value="uS11_bact"/>
    <property type="match status" value="1"/>
</dbReference>
<dbReference type="PANTHER" id="PTHR11759">
    <property type="entry name" value="40S RIBOSOMAL PROTEIN S14/30S RIBOSOMAL PROTEIN S11"/>
    <property type="match status" value="1"/>
</dbReference>
<dbReference type="Pfam" id="PF00411">
    <property type="entry name" value="Ribosomal_S11"/>
    <property type="match status" value="1"/>
</dbReference>
<dbReference type="PIRSF" id="PIRSF002131">
    <property type="entry name" value="Ribosomal_S11"/>
    <property type="match status" value="1"/>
</dbReference>
<dbReference type="SUPFAM" id="SSF53137">
    <property type="entry name" value="Translational machinery components"/>
    <property type="match status" value="1"/>
</dbReference>
<dbReference type="PROSITE" id="PS00054">
    <property type="entry name" value="RIBOSOMAL_S11"/>
    <property type="match status" value="1"/>
</dbReference>
<sequence length="130" mass="13842">MAKPTKKTGSKKTKRNVPNGVAHIQSTFNNTIVSITDTAGEVIAWSSAGASGFKGARKGTPFAAQTAAEAAARRALEQGMRQIEVLVRGPGSGRETAIRALQVAGLEITLIRDVTPLPHNGCRRPKRRRV</sequence>
<feature type="chain" id="PRO_0000294822" description="Small ribosomal subunit protein uS11">
    <location>
        <begin position="1"/>
        <end position="130"/>
    </location>
</feature>
<proteinExistence type="inferred from homology"/>
<evidence type="ECO:0000255" key="1">
    <source>
        <dbReference type="HAMAP-Rule" id="MF_01310"/>
    </source>
</evidence>
<evidence type="ECO:0000305" key="2"/>
<gene>
    <name evidence="1" type="primary">rpsK</name>
    <name evidence="1" type="synonym">rps11</name>
    <name type="ordered locus">P9303_23251</name>
</gene>
<organism>
    <name type="scientific">Prochlorococcus marinus (strain MIT 9303)</name>
    <dbReference type="NCBI Taxonomy" id="59922"/>
    <lineage>
        <taxon>Bacteria</taxon>
        <taxon>Bacillati</taxon>
        <taxon>Cyanobacteriota</taxon>
        <taxon>Cyanophyceae</taxon>
        <taxon>Synechococcales</taxon>
        <taxon>Prochlorococcaceae</taxon>
        <taxon>Prochlorococcus</taxon>
    </lineage>
</organism>
<reference key="1">
    <citation type="journal article" date="2007" name="PLoS Genet.">
        <title>Patterns and implications of gene gain and loss in the evolution of Prochlorococcus.</title>
        <authorList>
            <person name="Kettler G.C."/>
            <person name="Martiny A.C."/>
            <person name="Huang K."/>
            <person name="Zucker J."/>
            <person name="Coleman M.L."/>
            <person name="Rodrigue S."/>
            <person name="Chen F."/>
            <person name="Lapidus A."/>
            <person name="Ferriera S."/>
            <person name="Johnson J."/>
            <person name="Steglich C."/>
            <person name="Church G.M."/>
            <person name="Richardson P."/>
            <person name="Chisholm S.W."/>
        </authorList>
    </citation>
    <scope>NUCLEOTIDE SEQUENCE [LARGE SCALE GENOMIC DNA]</scope>
    <source>
        <strain>MIT 9303</strain>
    </source>
</reference>